<sequence length="379" mass="40984">MATAGKVIKCKAAVAWEAAKPLVIEEVEVAPPQAMEVRVKILFTSLCHTDVYFWEAKGQTPVFPRIFGHEAGGIVESVGEGVTDLAPGDHVLPVFTGECKECAHCKSAESNMCDLLRINTDRGVMIGDGKSRFSINGKPIYHFVGTSTFSEYTVMHVGCVAKINPAAPLDKVCVLSCGISTGLGATINVAKPPKGSTVAIFGLGAVGLAAAEGARIAGASRIIGIDLNANRFEEARKFGCTEFVNPKDHDKPVQQVLAEMTNGGVDRSVECTGNINAMIQAFECVHDGWGVAVLVGVPHKDAEFKTHPMNFLNERTLKGTFFGNYKPRTDLPNVVELYMKKELEVEKFITHSVPFSEINTAFDLMHKGEGIRCIIRMEN</sequence>
<keyword id="KW-0963">Cytoplasm</keyword>
<keyword id="KW-0479">Metal-binding</keyword>
<keyword id="KW-0520">NAD</keyword>
<keyword id="KW-0560">Oxidoreductase</keyword>
<keyword id="KW-1185">Reference proteome</keyword>
<keyword id="KW-0862">Zinc</keyword>
<name>ADH1_ORYSI</name>
<evidence type="ECO:0000250" key="1">
    <source>
        <dbReference type="UniProtKB" id="P00327"/>
    </source>
</evidence>
<evidence type="ECO:0000250" key="2">
    <source>
        <dbReference type="UniProtKB" id="P06525"/>
    </source>
</evidence>
<evidence type="ECO:0000269" key="3">
    <source>
    </source>
</evidence>
<evidence type="ECO:0000305" key="4"/>
<gene>
    <name type="primary">ADH1</name>
    <name type="ORF">OsI_034290</name>
</gene>
<proteinExistence type="evidence at transcript level"/>
<dbReference type="EC" id="1.1.1.1" evidence="2"/>
<dbReference type="EMBL" id="X16296">
    <property type="protein sequence ID" value="CAA34363.1"/>
    <property type="molecule type" value="mRNA"/>
</dbReference>
<dbReference type="EMBL" id="AB118962">
    <property type="protein sequence ID" value="BAC87776.1"/>
    <property type="molecule type" value="Genomic_DNA"/>
</dbReference>
<dbReference type="EMBL" id="CM000136">
    <property type="protein sequence ID" value="EAY80331.1"/>
    <property type="molecule type" value="Genomic_DNA"/>
</dbReference>
<dbReference type="PIR" id="JQ0474">
    <property type="entry name" value="JQ0474"/>
</dbReference>
<dbReference type="SMR" id="Q75ZX4"/>
<dbReference type="STRING" id="39946.Q75ZX4"/>
<dbReference type="EnsemblPlants" id="BGIOSGA034312-TA">
    <property type="protein sequence ID" value="BGIOSGA034312-PA"/>
    <property type="gene ID" value="BGIOSGA034312"/>
</dbReference>
<dbReference type="Gramene" id="BGIOSGA034312-TA">
    <property type="protein sequence ID" value="BGIOSGA034312-PA"/>
    <property type="gene ID" value="BGIOSGA034312"/>
</dbReference>
<dbReference type="HOGENOM" id="CLU_026673_14_0_1"/>
<dbReference type="OMA" id="YIFAVEP"/>
<dbReference type="Proteomes" id="UP000007015">
    <property type="component" value="Chromosome 11"/>
</dbReference>
<dbReference type="ExpressionAtlas" id="Q75ZX4">
    <property type="expression patterns" value="differential"/>
</dbReference>
<dbReference type="GO" id="GO:0005829">
    <property type="term" value="C:cytosol"/>
    <property type="evidence" value="ECO:0007669"/>
    <property type="project" value="TreeGrafter"/>
</dbReference>
<dbReference type="GO" id="GO:0004022">
    <property type="term" value="F:alcohol dehydrogenase (NAD+) activity"/>
    <property type="evidence" value="ECO:0007669"/>
    <property type="project" value="UniProtKB-EC"/>
</dbReference>
<dbReference type="GO" id="GO:0051903">
    <property type="term" value="F:S-(hydroxymethyl)glutathione dehydrogenase [NAD(P)+] activity"/>
    <property type="evidence" value="ECO:0007669"/>
    <property type="project" value="TreeGrafter"/>
</dbReference>
<dbReference type="GO" id="GO:0008270">
    <property type="term" value="F:zinc ion binding"/>
    <property type="evidence" value="ECO:0007669"/>
    <property type="project" value="InterPro"/>
</dbReference>
<dbReference type="GO" id="GO:0046294">
    <property type="term" value="P:formaldehyde catabolic process"/>
    <property type="evidence" value="ECO:0007669"/>
    <property type="project" value="TreeGrafter"/>
</dbReference>
<dbReference type="CDD" id="cd08301">
    <property type="entry name" value="alcohol_DH_plants"/>
    <property type="match status" value="1"/>
</dbReference>
<dbReference type="FunFam" id="3.90.180.10:FF:000067">
    <property type="entry name" value="alcohol dehydrogenase 1-like isoform X1"/>
    <property type="match status" value="1"/>
</dbReference>
<dbReference type="FunFam" id="3.40.50.720:FF:001292">
    <property type="entry name" value="Alcohol dehydrogenase class-P"/>
    <property type="match status" value="1"/>
</dbReference>
<dbReference type="Gene3D" id="3.90.180.10">
    <property type="entry name" value="Medium-chain alcohol dehydrogenases, catalytic domain"/>
    <property type="match status" value="1"/>
</dbReference>
<dbReference type="Gene3D" id="3.40.50.720">
    <property type="entry name" value="NAD(P)-binding Rossmann-like Domain"/>
    <property type="match status" value="1"/>
</dbReference>
<dbReference type="InterPro" id="IPR013149">
    <property type="entry name" value="ADH-like_C"/>
</dbReference>
<dbReference type="InterPro" id="IPR013154">
    <property type="entry name" value="ADH-like_N"/>
</dbReference>
<dbReference type="InterPro" id="IPR002328">
    <property type="entry name" value="ADH_Zn_CS"/>
</dbReference>
<dbReference type="InterPro" id="IPR011032">
    <property type="entry name" value="GroES-like_sf"/>
</dbReference>
<dbReference type="InterPro" id="IPR036291">
    <property type="entry name" value="NAD(P)-bd_dom_sf"/>
</dbReference>
<dbReference type="PANTHER" id="PTHR43880">
    <property type="entry name" value="ALCOHOL DEHYDROGENASE"/>
    <property type="match status" value="1"/>
</dbReference>
<dbReference type="PANTHER" id="PTHR43880:SF9">
    <property type="entry name" value="ALCOHOL DEHYDROGENASE 1"/>
    <property type="match status" value="1"/>
</dbReference>
<dbReference type="Pfam" id="PF08240">
    <property type="entry name" value="ADH_N"/>
    <property type="match status" value="1"/>
</dbReference>
<dbReference type="Pfam" id="PF00107">
    <property type="entry name" value="ADH_zinc_N"/>
    <property type="match status" value="1"/>
</dbReference>
<dbReference type="SUPFAM" id="SSF50129">
    <property type="entry name" value="GroES-like"/>
    <property type="match status" value="2"/>
</dbReference>
<dbReference type="SUPFAM" id="SSF51735">
    <property type="entry name" value="NAD(P)-binding Rossmann-fold domains"/>
    <property type="match status" value="1"/>
</dbReference>
<dbReference type="PROSITE" id="PS00059">
    <property type="entry name" value="ADH_ZINC"/>
    <property type="match status" value="1"/>
</dbReference>
<feature type="chain" id="PRO_0000291461" description="Alcohol dehydrogenase 1">
    <location>
        <begin position="1"/>
        <end position="379"/>
    </location>
</feature>
<feature type="binding site" evidence="2">
    <location>
        <position position="47"/>
    </location>
    <ligand>
        <name>Zn(2+)</name>
        <dbReference type="ChEBI" id="CHEBI:29105"/>
        <label>1</label>
        <note>catalytic</note>
    </ligand>
</feature>
<feature type="binding site" evidence="2">
    <location>
        <position position="49"/>
    </location>
    <ligand>
        <name>an alcohol</name>
        <dbReference type="ChEBI" id="CHEBI:30879"/>
    </ligand>
</feature>
<feature type="binding site" evidence="2">
    <location>
        <position position="49"/>
    </location>
    <ligand>
        <name>NAD(+)</name>
        <dbReference type="ChEBI" id="CHEBI:57540"/>
    </ligand>
</feature>
<feature type="binding site" evidence="2">
    <location>
        <position position="49"/>
    </location>
    <ligand>
        <name>Zn(2+)</name>
        <dbReference type="ChEBI" id="CHEBI:29105"/>
        <label>1</label>
        <note>catalytic</note>
    </ligand>
</feature>
<feature type="binding site" evidence="1">
    <location>
        <position position="69"/>
    </location>
    <ligand>
        <name>an alcohol</name>
        <dbReference type="ChEBI" id="CHEBI:30879"/>
    </ligand>
</feature>
<feature type="binding site" evidence="2">
    <location>
        <position position="69"/>
    </location>
    <ligand>
        <name>Zn(2+)</name>
        <dbReference type="ChEBI" id="CHEBI:29105"/>
        <label>1</label>
        <note>catalytic</note>
    </ligand>
</feature>
<feature type="binding site" evidence="2">
    <location>
        <position position="99"/>
    </location>
    <ligand>
        <name>Zn(2+)</name>
        <dbReference type="ChEBI" id="CHEBI:29105"/>
        <label>2</label>
    </ligand>
</feature>
<feature type="binding site" evidence="2">
    <location>
        <position position="102"/>
    </location>
    <ligand>
        <name>Zn(2+)</name>
        <dbReference type="ChEBI" id="CHEBI:29105"/>
        <label>2</label>
    </ligand>
</feature>
<feature type="binding site" evidence="2">
    <location>
        <position position="105"/>
    </location>
    <ligand>
        <name>Zn(2+)</name>
        <dbReference type="ChEBI" id="CHEBI:29105"/>
        <label>2</label>
    </ligand>
</feature>
<feature type="binding site" evidence="2">
    <location>
        <position position="113"/>
    </location>
    <ligand>
        <name>Zn(2+)</name>
        <dbReference type="ChEBI" id="CHEBI:29105"/>
        <label>2</label>
    </ligand>
</feature>
<feature type="binding site" evidence="2">
    <location>
        <position position="177"/>
    </location>
    <ligand>
        <name>Zn(2+)</name>
        <dbReference type="ChEBI" id="CHEBI:29105"/>
        <label>1</label>
        <note>catalytic</note>
    </ligand>
</feature>
<feature type="binding site" evidence="2">
    <location>
        <begin position="202"/>
        <end position="207"/>
    </location>
    <ligand>
        <name>NAD(+)</name>
        <dbReference type="ChEBI" id="CHEBI:57540"/>
    </ligand>
</feature>
<feature type="binding site" evidence="2">
    <location>
        <position position="226"/>
    </location>
    <ligand>
        <name>NAD(+)</name>
        <dbReference type="ChEBI" id="CHEBI:57540"/>
    </ligand>
</feature>
<feature type="binding site" evidence="2">
    <location>
        <position position="231"/>
    </location>
    <ligand>
        <name>NAD(+)</name>
        <dbReference type="ChEBI" id="CHEBI:57540"/>
    </ligand>
</feature>
<feature type="binding site" evidence="2">
    <location>
        <position position="272"/>
    </location>
    <ligand>
        <name>NAD(+)</name>
        <dbReference type="ChEBI" id="CHEBI:57540"/>
    </ligand>
</feature>
<feature type="binding site" evidence="1">
    <location>
        <begin position="295"/>
        <end position="297"/>
    </location>
    <ligand>
        <name>NAD(+)</name>
        <dbReference type="ChEBI" id="CHEBI:57540"/>
    </ligand>
</feature>
<feature type="binding site" evidence="2">
    <location>
        <position position="295"/>
    </location>
    <ligand>
        <name>NAD(+)</name>
        <dbReference type="ChEBI" id="CHEBI:57540"/>
    </ligand>
</feature>
<feature type="binding site" evidence="2">
    <location>
        <position position="322"/>
    </location>
    <ligand>
        <name>NAD(+)</name>
        <dbReference type="ChEBI" id="CHEBI:57540"/>
    </ligand>
</feature>
<feature type="binding site" evidence="2">
    <location>
        <position position="372"/>
    </location>
    <ligand>
        <name>NAD(+)</name>
        <dbReference type="ChEBI" id="CHEBI:57540"/>
    </ligand>
</feature>
<feature type="sequence conflict" description="In Ref. 1; CAA34363." evidence="4" ref="1">
    <original>A</original>
    <variation>G</variation>
    <location>
        <position position="19"/>
    </location>
</feature>
<feature type="sequence conflict" description="In Ref. 1; CAA34363." evidence="4" ref="1">
    <original>V</original>
    <variation>S</variation>
    <location>
        <position position="23"/>
    </location>
</feature>
<feature type="sequence conflict" description="In Ref. 1; CAA34363." evidence="4" ref="1">
    <original>PPQA</original>
    <variation>KE</variation>
    <location>
        <begin position="31"/>
        <end position="34"/>
    </location>
</feature>
<feature type="sequence conflict" description="In Ref. 1; CAA34363." evidence="4" ref="1">
    <original>V</original>
    <variation>I</variation>
    <location>
        <position position="144"/>
    </location>
</feature>
<feature type="sequence conflict" description="In Ref. 1; CAA34363." evidence="4" ref="1">
    <location>
        <position position="192"/>
    </location>
</feature>
<feature type="sequence conflict" description="In Ref. 1; CAA34363." evidence="4" ref="1">
    <original>A</original>
    <variation>R</variation>
    <location>
        <position position="217"/>
    </location>
</feature>
<feature type="sequence conflict" description="In Ref. 1; CAA34363." evidence="4" ref="1">
    <original>V</original>
    <variation>I</variation>
    <location>
        <position position="291"/>
    </location>
</feature>
<feature type="sequence conflict" description="In Ref. 1; CAA34363." evidence="4" ref="1">
    <original>G</original>
    <variation>A</variation>
    <location>
        <position position="370"/>
    </location>
</feature>
<accession>Q75ZX4</accession>
<accession>P20306</accession>
<protein>
    <recommendedName>
        <fullName>Alcohol dehydrogenase 1</fullName>
        <ecNumber evidence="2">1.1.1.1</ecNumber>
    </recommendedName>
</protein>
<reference key="1">
    <citation type="journal article" date="1989" name="Plant Mol. Biol.">
        <title>Rice alcohol dehydrogenase genes: anaerobic induction, organ specific expression and characterization of cDNA clones.</title>
        <authorList>
            <person name="Xie Y."/>
            <person name="Wu R."/>
        </authorList>
    </citation>
    <scope>NUCLEOTIDE SEQUENCE [MRNA]</scope>
    <scope>HOMODIMER</scope>
    <source>
        <strain>cv. IR26</strain>
        <tissue>Seedling</tissue>
    </source>
</reference>
<reference key="2">
    <citation type="journal article" date="2004" name="Theor. Appl. Genet.">
        <title>Nucleotide polymorphism in the Adh1 locus region of the wild rice Oryza rufipogon.</title>
        <authorList>
            <person name="Yoshida K."/>
            <person name="Miyashita N.T."/>
            <person name="Ishii T."/>
        </authorList>
    </citation>
    <scope>NUCLEOTIDE SEQUENCE [GENOMIC DNA]</scope>
</reference>
<reference key="3">
    <citation type="journal article" date="2005" name="PLoS Biol.">
        <title>The genomes of Oryza sativa: a history of duplications.</title>
        <authorList>
            <person name="Yu J."/>
            <person name="Wang J."/>
            <person name="Lin W."/>
            <person name="Li S."/>
            <person name="Li H."/>
            <person name="Zhou J."/>
            <person name="Ni P."/>
            <person name="Dong W."/>
            <person name="Hu S."/>
            <person name="Zeng C."/>
            <person name="Zhang J."/>
            <person name="Zhang Y."/>
            <person name="Li R."/>
            <person name="Xu Z."/>
            <person name="Li S."/>
            <person name="Li X."/>
            <person name="Zheng H."/>
            <person name="Cong L."/>
            <person name="Lin L."/>
            <person name="Yin J."/>
            <person name="Geng J."/>
            <person name="Li G."/>
            <person name="Shi J."/>
            <person name="Liu J."/>
            <person name="Lv H."/>
            <person name="Li J."/>
            <person name="Wang J."/>
            <person name="Deng Y."/>
            <person name="Ran L."/>
            <person name="Shi X."/>
            <person name="Wang X."/>
            <person name="Wu Q."/>
            <person name="Li C."/>
            <person name="Ren X."/>
            <person name="Wang J."/>
            <person name="Wang X."/>
            <person name="Li D."/>
            <person name="Liu D."/>
            <person name="Zhang X."/>
            <person name="Ji Z."/>
            <person name="Zhao W."/>
            <person name="Sun Y."/>
            <person name="Zhang Z."/>
            <person name="Bao J."/>
            <person name="Han Y."/>
            <person name="Dong L."/>
            <person name="Ji J."/>
            <person name="Chen P."/>
            <person name="Wu S."/>
            <person name="Liu J."/>
            <person name="Xiao Y."/>
            <person name="Bu D."/>
            <person name="Tan J."/>
            <person name="Yang L."/>
            <person name="Ye C."/>
            <person name="Zhang J."/>
            <person name="Xu J."/>
            <person name="Zhou Y."/>
            <person name="Yu Y."/>
            <person name="Zhang B."/>
            <person name="Zhuang S."/>
            <person name="Wei H."/>
            <person name="Liu B."/>
            <person name="Lei M."/>
            <person name="Yu H."/>
            <person name="Li Y."/>
            <person name="Xu H."/>
            <person name="Wei S."/>
            <person name="He X."/>
            <person name="Fang L."/>
            <person name="Zhang Z."/>
            <person name="Zhang Y."/>
            <person name="Huang X."/>
            <person name="Su Z."/>
            <person name="Tong W."/>
            <person name="Li J."/>
            <person name="Tong Z."/>
            <person name="Li S."/>
            <person name="Ye J."/>
            <person name="Wang L."/>
            <person name="Fang L."/>
            <person name="Lei T."/>
            <person name="Chen C.-S."/>
            <person name="Chen H.-C."/>
            <person name="Xu Z."/>
            <person name="Li H."/>
            <person name="Huang H."/>
            <person name="Zhang F."/>
            <person name="Xu H."/>
            <person name="Li N."/>
            <person name="Zhao C."/>
            <person name="Li S."/>
            <person name="Dong L."/>
            <person name="Huang Y."/>
            <person name="Li L."/>
            <person name="Xi Y."/>
            <person name="Qi Q."/>
            <person name="Li W."/>
            <person name="Zhang B."/>
            <person name="Hu W."/>
            <person name="Zhang Y."/>
            <person name="Tian X."/>
            <person name="Jiao Y."/>
            <person name="Liang X."/>
            <person name="Jin J."/>
            <person name="Gao L."/>
            <person name="Zheng W."/>
            <person name="Hao B."/>
            <person name="Liu S.-M."/>
            <person name="Wang W."/>
            <person name="Yuan L."/>
            <person name="Cao M."/>
            <person name="McDermott J."/>
            <person name="Samudrala R."/>
            <person name="Wang J."/>
            <person name="Wong G.K.-S."/>
            <person name="Yang H."/>
        </authorList>
    </citation>
    <scope>NUCLEOTIDE SEQUENCE [LARGE SCALE GENOMIC DNA]</scope>
    <source>
        <strain>cv. 93-11</strain>
    </source>
</reference>
<organism>
    <name type="scientific">Oryza sativa subsp. indica</name>
    <name type="common">Rice</name>
    <dbReference type="NCBI Taxonomy" id="39946"/>
    <lineage>
        <taxon>Eukaryota</taxon>
        <taxon>Viridiplantae</taxon>
        <taxon>Streptophyta</taxon>
        <taxon>Embryophyta</taxon>
        <taxon>Tracheophyta</taxon>
        <taxon>Spermatophyta</taxon>
        <taxon>Magnoliopsida</taxon>
        <taxon>Liliopsida</taxon>
        <taxon>Poales</taxon>
        <taxon>Poaceae</taxon>
        <taxon>BOP clade</taxon>
        <taxon>Oryzoideae</taxon>
        <taxon>Oryzeae</taxon>
        <taxon>Oryzinae</taxon>
        <taxon>Oryza</taxon>
        <taxon>Oryza sativa</taxon>
    </lineage>
</organism>
<comment type="catalytic activity">
    <reaction evidence="2">
        <text>a primary alcohol + NAD(+) = an aldehyde + NADH + H(+)</text>
        <dbReference type="Rhea" id="RHEA:10736"/>
        <dbReference type="ChEBI" id="CHEBI:15378"/>
        <dbReference type="ChEBI" id="CHEBI:15734"/>
        <dbReference type="ChEBI" id="CHEBI:17478"/>
        <dbReference type="ChEBI" id="CHEBI:57540"/>
        <dbReference type="ChEBI" id="CHEBI:57945"/>
        <dbReference type="EC" id="1.1.1.1"/>
    </reaction>
</comment>
<comment type="catalytic activity">
    <reaction evidence="2">
        <text>a secondary alcohol + NAD(+) = a ketone + NADH + H(+)</text>
        <dbReference type="Rhea" id="RHEA:10740"/>
        <dbReference type="ChEBI" id="CHEBI:15378"/>
        <dbReference type="ChEBI" id="CHEBI:17087"/>
        <dbReference type="ChEBI" id="CHEBI:35681"/>
        <dbReference type="ChEBI" id="CHEBI:57540"/>
        <dbReference type="ChEBI" id="CHEBI:57945"/>
        <dbReference type="EC" id="1.1.1.1"/>
    </reaction>
</comment>
<comment type="cofactor">
    <cofactor evidence="2">
        <name>Zn(2+)</name>
        <dbReference type="ChEBI" id="CHEBI:29105"/>
    </cofactor>
    <text evidence="2">Binds 2 Zn(2+) ions per subunit.</text>
</comment>
<comment type="subunit">
    <text evidence="3">Homodimer.</text>
</comment>
<comment type="subcellular location">
    <subcellularLocation>
        <location evidence="2">Cytoplasm</location>
    </subcellularLocation>
</comment>
<comment type="similarity">
    <text evidence="4">Belongs to the zinc-containing alcohol dehydrogenase family.</text>
</comment>